<organism>
    <name type="scientific">Escherichia coli (strain K12)</name>
    <dbReference type="NCBI Taxonomy" id="83333"/>
    <lineage>
        <taxon>Bacteria</taxon>
        <taxon>Pseudomonadati</taxon>
        <taxon>Pseudomonadota</taxon>
        <taxon>Gammaproteobacteria</taxon>
        <taxon>Enterobacterales</taxon>
        <taxon>Enterobacteriaceae</taxon>
        <taxon>Escherichia</taxon>
    </lineage>
</organism>
<protein>
    <recommendedName>
        <fullName>H repeat-associated putative transposase YhhI</fullName>
    </recommendedName>
    <alternativeName>
        <fullName>ORF-H</fullName>
    </alternativeName>
</protein>
<reference key="1">
    <citation type="journal article" date="1993" name="J. Bacteriol.">
        <title>Rhs elements of Escherichia coli K-12: complex composites of shared and unique components that have different evolutionary histories.</title>
        <authorList>
            <person name="Zhao S."/>
            <person name="Sandt C.H."/>
            <person name="Feulner G."/>
            <person name="Vlazny D.A."/>
            <person name="Gray J.A."/>
            <person name="Hill C.W."/>
        </authorList>
    </citation>
    <scope>NUCLEOTIDE SEQUENCE [GENOMIC DNA]</scope>
    <source>
        <strain>K12</strain>
    </source>
</reference>
<reference key="2">
    <citation type="journal article" date="1994" name="Nucleic Acids Res.">
        <title>Analysis of the Escherichia coli genome. V. DNA sequence of the region from 76.0 to 81.5 minutes.</title>
        <authorList>
            <person name="Sofia H.J."/>
            <person name="Burland V."/>
            <person name="Daniels D.L."/>
            <person name="Plunkett G. III"/>
            <person name="Blattner F.R."/>
        </authorList>
    </citation>
    <scope>NUCLEOTIDE SEQUENCE [LARGE SCALE GENOMIC DNA]</scope>
    <source>
        <strain>K12 / MG1655 / ATCC 47076</strain>
    </source>
</reference>
<reference key="3">
    <citation type="journal article" date="1997" name="Science">
        <title>The complete genome sequence of Escherichia coli K-12.</title>
        <authorList>
            <person name="Blattner F.R."/>
            <person name="Plunkett G. III"/>
            <person name="Bloch C.A."/>
            <person name="Perna N.T."/>
            <person name="Burland V."/>
            <person name="Riley M."/>
            <person name="Collado-Vides J."/>
            <person name="Glasner J.D."/>
            <person name="Rode C.K."/>
            <person name="Mayhew G.F."/>
            <person name="Gregor J."/>
            <person name="Davis N.W."/>
            <person name="Kirkpatrick H.A."/>
            <person name="Goeden M.A."/>
            <person name="Rose D.J."/>
            <person name="Mau B."/>
            <person name="Shao Y."/>
        </authorList>
    </citation>
    <scope>NUCLEOTIDE SEQUENCE [LARGE SCALE GENOMIC DNA]</scope>
    <source>
        <strain>K12 / MG1655 / ATCC 47076</strain>
    </source>
</reference>
<reference key="4">
    <citation type="journal article" date="2006" name="Mol. Syst. Biol.">
        <title>Highly accurate genome sequences of Escherichia coli K-12 strains MG1655 and W3110.</title>
        <authorList>
            <person name="Hayashi K."/>
            <person name="Morooka N."/>
            <person name="Yamamoto Y."/>
            <person name="Fujita K."/>
            <person name="Isono K."/>
            <person name="Choi S."/>
            <person name="Ohtsubo E."/>
            <person name="Baba T."/>
            <person name="Wanner B.L."/>
            <person name="Mori H."/>
            <person name="Horiuchi T."/>
        </authorList>
    </citation>
    <scope>NUCLEOTIDE SEQUENCE [LARGE SCALE GENOMIC DNA]</scope>
    <source>
        <strain>K12 / W3110 / ATCC 27325 / DSM 5911</strain>
    </source>
</reference>
<reference key="5">
    <citation type="journal article" date="1995" name="J. Bacteriol.">
        <title>Reshuffling of Rhs components to create a new element.</title>
        <authorList>
            <person name="Zhao S."/>
            <person name="Hill C.W."/>
        </authorList>
    </citation>
    <scope>NUCLEOTIDE SEQUENCE [GENOMIC DNA] OF 363-378</scope>
    <source>
        <strain>O2:HN / ECOR-50 / P97 / UPEC</strain>
    </source>
</reference>
<feature type="chain" id="PRO_0000169552" description="H repeat-associated putative transposase YhhI">
    <location>
        <begin position="1"/>
        <end position="378"/>
    </location>
</feature>
<comment type="similarity">
    <text evidence="1">Belongs to the transposase 11 family.</text>
</comment>
<sequence>MELKKLMEHISIIPDYRQTWKVEHKLSDILLLTICAVISGAEGWEDIEDFGETHLDFLKQYGDFENGIPVHDTIARVVSCISPAKFHECFINWMRDCHSSDDKDVIAIDGKTLRHSYDKSRRRGAIHVISAFSTMHSLVIGQIKTDEKSNEITAIPELLNMLDIKGKIITTDAMGCQKDIAEKIQKQGGDYLFAVKGTQGRLNKAFEEKFPLKELNNPEHDSYAISEKSHGREEIRLHIVCDVPDELIDFTFEWKGLKKLCVAVSFRSIIAEQKKEPEMTVRYYISSADLTAEKFATAIRNHWHVENKLHWRLDVVMNEDDCKIRRGNAAELFSGIRHIAINILTNDKVFKAGLRRKMRKAAMDRNYLASVLAGSGLS</sequence>
<evidence type="ECO:0000305" key="1"/>
<gene>
    <name type="primary">yhhI</name>
    <name type="ordered locus">b3484</name>
    <name type="ordered locus">JW3451</name>
</gene>
<dbReference type="EMBL" id="L02370">
    <property type="protein sequence ID" value="AAC61885.1"/>
    <property type="molecule type" value="Genomic_DNA"/>
</dbReference>
<dbReference type="EMBL" id="U00039">
    <property type="protein sequence ID" value="AAB18459.1"/>
    <property type="molecule type" value="Genomic_DNA"/>
</dbReference>
<dbReference type="EMBL" id="U00096">
    <property type="protein sequence ID" value="AAC76509.1"/>
    <property type="molecule type" value="Genomic_DNA"/>
</dbReference>
<dbReference type="EMBL" id="AP009048">
    <property type="protein sequence ID" value="BAE77809.1"/>
    <property type="molecule type" value="Genomic_DNA"/>
</dbReference>
<dbReference type="EMBL" id="AH003093">
    <property type="protein sequence ID" value="AAA66214.1"/>
    <property type="molecule type" value="Genomic_DNA"/>
</dbReference>
<dbReference type="PIR" id="S47703">
    <property type="entry name" value="S47703"/>
</dbReference>
<dbReference type="RefSeq" id="NP_417941.1">
    <property type="nucleotide sequence ID" value="NC_000913.3"/>
</dbReference>
<dbReference type="RefSeq" id="WP_000420980.1">
    <property type="nucleotide sequence ID" value="NZ_SSUW01000040.1"/>
</dbReference>
<dbReference type="BioGRID" id="4263110">
    <property type="interactions" value="120"/>
</dbReference>
<dbReference type="BioGRID" id="852301">
    <property type="interactions" value="1"/>
</dbReference>
<dbReference type="FunCoup" id="P28912">
    <property type="interactions" value="187"/>
</dbReference>
<dbReference type="IntAct" id="P28912">
    <property type="interactions" value="7"/>
</dbReference>
<dbReference type="STRING" id="511145.b3484"/>
<dbReference type="PaxDb" id="511145-b3484"/>
<dbReference type="EnsemblBacteria" id="AAC76509">
    <property type="protein sequence ID" value="AAC76509"/>
    <property type="gene ID" value="b3484"/>
</dbReference>
<dbReference type="GeneID" id="947992"/>
<dbReference type="KEGG" id="ecj:JW3451"/>
<dbReference type="KEGG" id="eco:b3484"/>
<dbReference type="KEGG" id="ecoc:C3026_18870"/>
<dbReference type="PATRIC" id="fig|1411691.4.peg.3240"/>
<dbReference type="EchoBASE" id="EB1487"/>
<dbReference type="eggNOG" id="COG5433">
    <property type="taxonomic scope" value="Bacteria"/>
</dbReference>
<dbReference type="HOGENOM" id="CLU_046404_0_1_6"/>
<dbReference type="InParanoid" id="P28912"/>
<dbReference type="OMA" id="HECFISW"/>
<dbReference type="OrthoDB" id="8001376at2"/>
<dbReference type="PhylomeDB" id="P28912"/>
<dbReference type="BioCyc" id="EcoCyc:EG11525-MONOMER"/>
<dbReference type="PRO" id="PR:P28912"/>
<dbReference type="Proteomes" id="UP000000625">
    <property type="component" value="Chromosome"/>
</dbReference>
<dbReference type="GO" id="GO:0003677">
    <property type="term" value="F:DNA binding"/>
    <property type="evidence" value="ECO:0007669"/>
    <property type="project" value="InterPro"/>
</dbReference>
<dbReference type="GO" id="GO:0004803">
    <property type="term" value="F:transposase activity"/>
    <property type="evidence" value="ECO:0007669"/>
    <property type="project" value="InterPro"/>
</dbReference>
<dbReference type="GO" id="GO:0006313">
    <property type="term" value="P:DNA transposition"/>
    <property type="evidence" value="ECO:0007669"/>
    <property type="project" value="InterPro"/>
</dbReference>
<dbReference type="InterPro" id="IPR047647">
    <property type="entry name" value="ISAs1_transpos"/>
</dbReference>
<dbReference type="InterPro" id="IPR002559">
    <property type="entry name" value="Transposase_11"/>
</dbReference>
<dbReference type="InterPro" id="IPR051698">
    <property type="entry name" value="Transposase_11-like"/>
</dbReference>
<dbReference type="InterPro" id="IPR032806">
    <property type="entry name" value="YbfD_N"/>
</dbReference>
<dbReference type="NCBIfam" id="NF033564">
    <property type="entry name" value="transpos_ISAs1"/>
    <property type="match status" value="1"/>
</dbReference>
<dbReference type="PANTHER" id="PTHR30298">
    <property type="entry name" value="H REPEAT-ASSOCIATED PREDICTED TRANSPOSASE"/>
    <property type="match status" value="1"/>
</dbReference>
<dbReference type="PANTHER" id="PTHR30298:SF0">
    <property type="entry name" value="PROTEIN YBFL-RELATED"/>
    <property type="match status" value="1"/>
</dbReference>
<dbReference type="Pfam" id="PF01609">
    <property type="entry name" value="DDE_Tnp_1"/>
    <property type="match status" value="1"/>
</dbReference>
<dbReference type="Pfam" id="PF13808">
    <property type="entry name" value="DDE_Tnp_1_assoc"/>
    <property type="match status" value="1"/>
</dbReference>
<proteinExistence type="inferred from homology"/>
<keyword id="KW-1185">Reference proteome</keyword>
<accession>P28912</accession>
<accession>Q2M7E7</accession>
<name>YHHI_ECOLI</name>